<comment type="function">
    <text evidence="1">Responsible for channeling the electrons from the oxidation of dihydroorotate from the FMN redox center in the PyrD type B subunit to the ultimate electron acceptor NAD(+).</text>
</comment>
<comment type="cofactor">
    <cofactor evidence="1">
        <name>[2Fe-2S] cluster</name>
        <dbReference type="ChEBI" id="CHEBI:190135"/>
    </cofactor>
    <text evidence="1">Binds 1 [2Fe-2S] cluster per subunit.</text>
</comment>
<comment type="cofactor">
    <cofactor evidence="1">
        <name>FAD</name>
        <dbReference type="ChEBI" id="CHEBI:57692"/>
    </cofactor>
    <text evidence="1">Binds 1 FAD per subunit.</text>
</comment>
<comment type="pathway">
    <text evidence="1">Pyrimidine metabolism; UMP biosynthesis via de novo pathway; orotate from (S)-dihydroorotate (NAD(+) route): step 1/1.</text>
</comment>
<comment type="subunit">
    <text evidence="1">Heterotetramer of 2 PyrK and 2 PyrD type B subunits.</text>
</comment>
<comment type="similarity">
    <text evidence="1">Belongs to the PyrK family.</text>
</comment>
<accession>B7H6M1</accession>
<feature type="chain" id="PRO_1000138908" description="Dihydroorotate dehydrogenase B (NAD(+)), electron transfer subunit">
    <location>
        <begin position="1"/>
        <end position="259"/>
    </location>
</feature>
<feature type="domain" description="FAD-binding FR-type" evidence="1">
    <location>
        <begin position="2"/>
        <end position="102"/>
    </location>
</feature>
<feature type="binding site" evidence="1">
    <location>
        <begin position="53"/>
        <end position="56"/>
    </location>
    <ligand>
        <name>FAD</name>
        <dbReference type="ChEBI" id="CHEBI:57692"/>
    </ligand>
</feature>
<feature type="binding site" evidence="1">
    <location>
        <begin position="70"/>
        <end position="72"/>
    </location>
    <ligand>
        <name>FAD</name>
        <dbReference type="ChEBI" id="CHEBI:57692"/>
    </ligand>
</feature>
<feature type="binding site" evidence="1">
    <location>
        <begin position="77"/>
        <end position="78"/>
    </location>
    <ligand>
        <name>FAD</name>
        <dbReference type="ChEBI" id="CHEBI:57692"/>
    </ligand>
</feature>
<feature type="binding site" evidence="1">
    <location>
        <position position="221"/>
    </location>
    <ligand>
        <name>[2Fe-2S] cluster</name>
        <dbReference type="ChEBI" id="CHEBI:190135"/>
    </ligand>
</feature>
<feature type="binding site" evidence="1">
    <location>
        <position position="226"/>
    </location>
    <ligand>
        <name>[2Fe-2S] cluster</name>
        <dbReference type="ChEBI" id="CHEBI:190135"/>
    </ligand>
</feature>
<feature type="binding site" evidence="1">
    <location>
        <position position="229"/>
    </location>
    <ligand>
        <name>[2Fe-2S] cluster</name>
        <dbReference type="ChEBI" id="CHEBI:190135"/>
    </ligand>
</feature>
<feature type="binding site" evidence="1">
    <location>
        <position position="246"/>
    </location>
    <ligand>
        <name>[2Fe-2S] cluster</name>
        <dbReference type="ChEBI" id="CHEBI:190135"/>
    </ligand>
</feature>
<evidence type="ECO:0000255" key="1">
    <source>
        <dbReference type="HAMAP-Rule" id="MF_01211"/>
    </source>
</evidence>
<organism>
    <name type="scientific">Bacillus cereus (strain B4264)</name>
    <dbReference type="NCBI Taxonomy" id="405532"/>
    <lineage>
        <taxon>Bacteria</taxon>
        <taxon>Bacillati</taxon>
        <taxon>Bacillota</taxon>
        <taxon>Bacilli</taxon>
        <taxon>Bacillales</taxon>
        <taxon>Bacillaceae</taxon>
        <taxon>Bacillus</taxon>
        <taxon>Bacillus cereus group</taxon>
    </lineage>
</organism>
<name>PYRK_BACC4</name>
<proteinExistence type="inferred from homology"/>
<protein>
    <recommendedName>
        <fullName evidence="1">Dihydroorotate dehydrogenase B (NAD(+)), electron transfer subunit</fullName>
    </recommendedName>
    <alternativeName>
        <fullName evidence="1">Dihydroorotate oxidase B, electron transfer subunit</fullName>
    </alternativeName>
</protein>
<reference key="1">
    <citation type="submission" date="2008-10" db="EMBL/GenBank/DDBJ databases">
        <title>Genome sequence of Bacillus cereus B4264.</title>
        <authorList>
            <person name="Dodson R.J."/>
            <person name="Durkin A.S."/>
            <person name="Rosovitz M.J."/>
            <person name="Rasko D.A."/>
            <person name="Hoffmaster A."/>
            <person name="Ravel J."/>
            <person name="Sutton G."/>
        </authorList>
    </citation>
    <scope>NUCLEOTIDE SEQUENCE [LARGE SCALE GENOMIC DNA]</scope>
    <source>
        <strain>B4264</strain>
    </source>
</reference>
<gene>
    <name evidence="1" type="primary">pyrK</name>
    <name type="ordered locus">BCB4264_A3983</name>
</gene>
<sequence length="259" mass="28430">MMQKQNMIVVNQKEIAKNIYELVLQGTLVQQMNEPGQFVHIKVAEGIAPLLRRPISICNVDQEKNEFTMLYRAEGQGTKTLATRKQGEMVDVLGPLGHGFPLEEAEAGQTALLVGGGIGVPPLYELSQRLVAKGVRVIHILGFQTKDVVFYEEKFAELGDTYVATVDGTHGTKGFVTDVIDNYGIDFDILYSCGPLAMLRALEGRYKEKKAYISLEERMGCGIGACFACVCHLQEDPSGHSYKKVCSDGPVFPIGEVVL</sequence>
<dbReference type="EMBL" id="CP001176">
    <property type="protein sequence ID" value="ACK59975.1"/>
    <property type="molecule type" value="Genomic_DNA"/>
</dbReference>
<dbReference type="RefSeq" id="WP_000983356.1">
    <property type="nucleotide sequence ID" value="NC_011725.1"/>
</dbReference>
<dbReference type="SMR" id="B7H6M1"/>
<dbReference type="KEGG" id="bcb:BCB4264_A3983"/>
<dbReference type="HOGENOM" id="CLU_003827_1_2_9"/>
<dbReference type="UniPathway" id="UPA00070">
    <property type="reaction ID" value="UER00945"/>
</dbReference>
<dbReference type="Proteomes" id="UP000007096">
    <property type="component" value="Chromosome"/>
</dbReference>
<dbReference type="GO" id="GO:0051537">
    <property type="term" value="F:2 iron, 2 sulfur cluster binding"/>
    <property type="evidence" value="ECO:0007669"/>
    <property type="project" value="UniProtKB-KW"/>
</dbReference>
<dbReference type="GO" id="GO:0009055">
    <property type="term" value="F:electron transfer activity"/>
    <property type="evidence" value="ECO:0007669"/>
    <property type="project" value="UniProtKB-UniRule"/>
</dbReference>
<dbReference type="GO" id="GO:0050660">
    <property type="term" value="F:flavin adenine dinucleotide binding"/>
    <property type="evidence" value="ECO:0007669"/>
    <property type="project" value="InterPro"/>
</dbReference>
<dbReference type="GO" id="GO:0046872">
    <property type="term" value="F:metal ion binding"/>
    <property type="evidence" value="ECO:0007669"/>
    <property type="project" value="UniProtKB-KW"/>
</dbReference>
<dbReference type="GO" id="GO:0016491">
    <property type="term" value="F:oxidoreductase activity"/>
    <property type="evidence" value="ECO:0007669"/>
    <property type="project" value="InterPro"/>
</dbReference>
<dbReference type="GO" id="GO:0044205">
    <property type="term" value="P:'de novo' UMP biosynthetic process"/>
    <property type="evidence" value="ECO:0007669"/>
    <property type="project" value="UniProtKB-UniRule"/>
</dbReference>
<dbReference type="CDD" id="cd06218">
    <property type="entry name" value="DHOD_e_trans"/>
    <property type="match status" value="1"/>
</dbReference>
<dbReference type="FunFam" id="2.10.240.10:FF:000001">
    <property type="entry name" value="Dihydroorotate dehydrogenase B (NAD(+)), electron transfer subunit"/>
    <property type="match status" value="1"/>
</dbReference>
<dbReference type="FunFam" id="2.40.30.10:FF:000045">
    <property type="entry name" value="Dihydroorotate dehydrogenase B (NAD(+)), electron transfer subunit"/>
    <property type="match status" value="1"/>
</dbReference>
<dbReference type="FunFam" id="3.40.50.80:FF:000017">
    <property type="entry name" value="Dihydroorotate dehydrogenase B (NAD(+)), electron transfer subunit"/>
    <property type="match status" value="1"/>
</dbReference>
<dbReference type="Gene3D" id="2.10.240.10">
    <property type="entry name" value="Dihydroorotate dehydrogenase, electron transfer subunit"/>
    <property type="match status" value="1"/>
</dbReference>
<dbReference type="Gene3D" id="3.40.50.80">
    <property type="entry name" value="Nucleotide-binding domain of ferredoxin-NADP reductase (FNR) module"/>
    <property type="match status" value="1"/>
</dbReference>
<dbReference type="Gene3D" id="2.40.30.10">
    <property type="entry name" value="Translation factors"/>
    <property type="match status" value="1"/>
</dbReference>
<dbReference type="HAMAP" id="MF_01211">
    <property type="entry name" value="DHODB_Fe_S_bind"/>
    <property type="match status" value="1"/>
</dbReference>
<dbReference type="InterPro" id="IPR012165">
    <property type="entry name" value="Cyt_c3_hydrogenase_gsu"/>
</dbReference>
<dbReference type="InterPro" id="IPR037117">
    <property type="entry name" value="Dihydroorotate_DH_ele_sf"/>
</dbReference>
<dbReference type="InterPro" id="IPR019480">
    <property type="entry name" value="Dihydroorotate_DH_Fe-S-bd"/>
</dbReference>
<dbReference type="InterPro" id="IPR023455">
    <property type="entry name" value="Dihydroorotate_DHASE_ETsu"/>
</dbReference>
<dbReference type="InterPro" id="IPR017927">
    <property type="entry name" value="FAD-bd_FR_type"/>
</dbReference>
<dbReference type="InterPro" id="IPR039261">
    <property type="entry name" value="FNR_nucleotide-bd"/>
</dbReference>
<dbReference type="InterPro" id="IPR001433">
    <property type="entry name" value="OxRdtase_FAD/NAD-bd"/>
</dbReference>
<dbReference type="InterPro" id="IPR050353">
    <property type="entry name" value="PyrK_electron_transfer"/>
</dbReference>
<dbReference type="InterPro" id="IPR017938">
    <property type="entry name" value="Riboflavin_synthase-like_b-brl"/>
</dbReference>
<dbReference type="NCBIfam" id="NF000797">
    <property type="entry name" value="PRK00054.1-2"/>
    <property type="match status" value="1"/>
</dbReference>
<dbReference type="NCBIfam" id="NF000799">
    <property type="entry name" value="PRK00054.1-4"/>
    <property type="match status" value="1"/>
</dbReference>
<dbReference type="PANTHER" id="PTHR43513">
    <property type="entry name" value="DIHYDROOROTATE DEHYDROGENASE B (NAD(+)), ELECTRON TRANSFER SUBUNIT"/>
    <property type="match status" value="1"/>
</dbReference>
<dbReference type="PANTHER" id="PTHR43513:SF3">
    <property type="entry name" value="DIHYDROOROTATE DEHYDROGENASE B (NAD(+)), ELECTRON TRANSFER SUBUNIT-RELATED"/>
    <property type="match status" value="1"/>
</dbReference>
<dbReference type="Pfam" id="PF10418">
    <property type="entry name" value="DHODB_Fe-S_bind"/>
    <property type="match status" value="1"/>
</dbReference>
<dbReference type="Pfam" id="PF00175">
    <property type="entry name" value="NAD_binding_1"/>
    <property type="match status" value="1"/>
</dbReference>
<dbReference type="PIRSF" id="PIRSF006816">
    <property type="entry name" value="Cyc3_hyd_g"/>
    <property type="match status" value="1"/>
</dbReference>
<dbReference type="PRINTS" id="PR00409">
    <property type="entry name" value="PHDIOXRDTASE"/>
</dbReference>
<dbReference type="SUPFAM" id="SSF52343">
    <property type="entry name" value="Ferredoxin reductase-like, C-terminal NADP-linked domain"/>
    <property type="match status" value="1"/>
</dbReference>
<dbReference type="SUPFAM" id="SSF63380">
    <property type="entry name" value="Riboflavin synthase domain-like"/>
    <property type="match status" value="1"/>
</dbReference>
<dbReference type="PROSITE" id="PS51384">
    <property type="entry name" value="FAD_FR"/>
    <property type="match status" value="1"/>
</dbReference>
<keyword id="KW-0001">2Fe-2S</keyword>
<keyword id="KW-0249">Electron transport</keyword>
<keyword id="KW-0274">FAD</keyword>
<keyword id="KW-0285">Flavoprotein</keyword>
<keyword id="KW-0408">Iron</keyword>
<keyword id="KW-0411">Iron-sulfur</keyword>
<keyword id="KW-0479">Metal-binding</keyword>
<keyword id="KW-0665">Pyrimidine biosynthesis</keyword>
<keyword id="KW-0813">Transport</keyword>